<name>TDT_ONCMY</name>
<proteinExistence type="evidence at transcript level"/>
<sequence length="501" mass="56859">MNHAGMLALVKKRKRPVEAGAQGQVEVKFKEVTLELVERKMGSSRRNFLTRLARSKGFRVEDVLSDDVTHVVAEDNQAEVLWAWLMGHGLRDVSRLALLDISWFTDSMREGRPVRVETRHSIQNTPTGTDCSPPTAVANVSQYACQRRTTTENHNNKIFTDVMEELAESSEFNESKGPCLAFRQAASVLKSLPSAVHCLKAIQGLPCLGEHTKAVMEEILTFGRSFKVEEIRCDERYQALKLFTSVFGVGPKTAEKWYRRGLRSLQEILTEPNIQLNRMQRAGFLYYSDISKAVSKAEAKAVGCIIEDTFHWIAPDAILALTGGFRRGKEYGHDVDFLLTMPEIGKDEGLLLHVIDRLKDQGILLYCDYQGSTFDVSKLPSCRFEDMDCFQKCFLILRLEQGQVEGERGLQRDPGDSRGWRAVRVDLVAPPVDRYAFALLGWTGSRFGRDLRTFAQKERQMLLDNHALYDKTKKLCLLATTEEDIFTHLGLEYVEPWQRNA</sequence>
<gene>
    <name type="primary">dntt</name>
    <name type="synonym">tdt</name>
</gene>
<feature type="chain" id="PRO_0000218796" description="DNA nucleotidylexotransferase">
    <location>
        <begin position="1"/>
        <end position="501"/>
    </location>
</feature>
<feature type="domain" description="BRCT" evidence="4">
    <location>
        <begin position="24"/>
        <end position="121"/>
    </location>
</feature>
<feature type="region of interest" description="Involved in DNA binding" evidence="3">
    <location>
        <begin position="249"/>
        <end position="253"/>
    </location>
</feature>
<feature type="short sequence motif" description="Nuclear localization signal" evidence="2">
    <location>
        <begin position="11"/>
        <end position="17"/>
    </location>
</feature>
<feature type="binding site" evidence="3">
    <location>
        <begin position="324"/>
        <end position="329"/>
    </location>
    <ligand>
        <name>a 2'-deoxyribonucleoside 5'-triphosphate</name>
        <dbReference type="ChEBI" id="CHEBI:61560"/>
    </ligand>
</feature>
<feature type="binding site" evidence="3">
    <location>
        <begin position="333"/>
        <end position="336"/>
    </location>
    <ligand>
        <name>a 2'-deoxyribonucleoside 5'-triphosphate</name>
        <dbReference type="ChEBI" id="CHEBI:61560"/>
    </ligand>
</feature>
<feature type="binding site" evidence="3">
    <location>
        <position position="334"/>
    </location>
    <ligand>
        <name>Mg(2+)</name>
        <dbReference type="ChEBI" id="CHEBI:18420"/>
    </ligand>
</feature>
<feature type="binding site" evidence="3">
    <location>
        <position position="336"/>
    </location>
    <ligand>
        <name>Mg(2+)</name>
        <dbReference type="ChEBI" id="CHEBI:18420"/>
    </ligand>
</feature>
<feature type="binding site" evidence="3">
    <location>
        <position position="426"/>
    </location>
    <ligand>
        <name>Mg(2+)</name>
        <dbReference type="ChEBI" id="CHEBI:18420"/>
    </ligand>
</feature>
<feature type="binding site" evidence="3">
    <location>
        <begin position="441"/>
        <end position="442"/>
    </location>
    <ligand>
        <name>a 2'-deoxyribonucleoside 5'-triphosphate</name>
        <dbReference type="ChEBI" id="CHEBI:61560"/>
    </ligand>
</feature>
<protein>
    <recommendedName>
        <fullName>DNA nucleotidylexotransferase</fullName>
        <ecNumber>2.7.7.31</ecNumber>
    </recommendedName>
    <alternativeName>
        <fullName>Terminal addition enzyme</fullName>
    </alternativeName>
    <alternativeName>
        <fullName>Terminal deoxynucleotidyltransferase</fullName>
        <shortName>Terminal transferase</shortName>
    </alternativeName>
</protein>
<organism>
    <name type="scientific">Oncorhynchus mykiss</name>
    <name type="common">Rainbow trout</name>
    <name type="synonym">Salmo gairdneri</name>
    <dbReference type="NCBI Taxonomy" id="8022"/>
    <lineage>
        <taxon>Eukaryota</taxon>
        <taxon>Metazoa</taxon>
        <taxon>Chordata</taxon>
        <taxon>Craniata</taxon>
        <taxon>Vertebrata</taxon>
        <taxon>Euteleostomi</taxon>
        <taxon>Actinopterygii</taxon>
        <taxon>Neopterygii</taxon>
        <taxon>Teleostei</taxon>
        <taxon>Protacanthopterygii</taxon>
        <taxon>Salmoniformes</taxon>
        <taxon>Salmonidae</taxon>
        <taxon>Salmoninae</taxon>
        <taxon>Oncorhynchus</taxon>
    </lineage>
</organism>
<reference key="1">
    <citation type="submission" date="1996-04" db="EMBL/GenBank/DDBJ databases">
        <authorList>
            <person name="Hansen J.D."/>
        </authorList>
    </citation>
    <scope>NUCLEOTIDE SEQUENCE [MRNA]</scope>
    <source>
        <strain>Shasta</strain>
    </source>
</reference>
<accession>Q92089</accession>
<comment type="function">
    <text evidence="3">Template-independent DNA polymerase which catalyzes the random addition of deoxynucleoside 5'-triphosphate to the 3'-end of a DNA initiator. One of the in vivo functions of this enzyme is the addition of nucleotides at the junction (N region) of rearranged Ig heavy chain and T-cell receptor gene segments during the maturation of B- and T-cells.</text>
</comment>
<comment type="catalytic activity">
    <reaction evidence="3">
        <text>DNA(n) + a 2'-deoxyribonucleoside 5'-triphosphate = DNA(n+1) + diphosphate</text>
        <dbReference type="Rhea" id="RHEA:22508"/>
        <dbReference type="Rhea" id="RHEA-COMP:17339"/>
        <dbReference type="Rhea" id="RHEA-COMP:17340"/>
        <dbReference type="ChEBI" id="CHEBI:33019"/>
        <dbReference type="ChEBI" id="CHEBI:61560"/>
        <dbReference type="ChEBI" id="CHEBI:173112"/>
        <dbReference type="EC" id="2.7.7.31"/>
    </reaction>
</comment>
<comment type="cofactor">
    <cofactor evidence="3">
        <name>Mg(2+)</name>
        <dbReference type="ChEBI" id="CHEBI:18420"/>
    </cofactor>
    <text evidence="3">Can also utilize other divalent cations, such as Mn(2+) and Co(2+) (in vitro).</text>
</comment>
<comment type="subcellular location">
    <subcellularLocation>
        <location evidence="1">Nucleus</location>
    </subcellularLocation>
</comment>
<comment type="similarity">
    <text evidence="5">Belongs to the DNA polymerase type-X family.</text>
</comment>
<dbReference type="EC" id="2.7.7.31"/>
<dbReference type="EMBL" id="U53366">
    <property type="protein sequence ID" value="AAB01980.1"/>
    <property type="molecule type" value="mRNA"/>
</dbReference>
<dbReference type="RefSeq" id="NP_001118178.1">
    <property type="nucleotide sequence ID" value="NM_001124706.1"/>
</dbReference>
<dbReference type="SMR" id="Q92089"/>
<dbReference type="GeneID" id="100136754"/>
<dbReference type="KEGG" id="omy:100136754"/>
<dbReference type="CTD" id="100136754"/>
<dbReference type="OrthoDB" id="205514at2759"/>
<dbReference type="Proteomes" id="UP000694395">
    <property type="component" value="Unplaced"/>
</dbReference>
<dbReference type="GO" id="GO:0005634">
    <property type="term" value="C:nucleus"/>
    <property type="evidence" value="ECO:0000250"/>
    <property type="project" value="UniProtKB"/>
</dbReference>
<dbReference type="GO" id="GO:0003677">
    <property type="term" value="F:DNA binding"/>
    <property type="evidence" value="ECO:0007669"/>
    <property type="project" value="InterPro"/>
</dbReference>
<dbReference type="GO" id="GO:0003912">
    <property type="term" value="F:DNA nucleotidylexotransferase activity"/>
    <property type="evidence" value="ECO:0000250"/>
    <property type="project" value="UniProtKB"/>
</dbReference>
<dbReference type="GO" id="GO:0003887">
    <property type="term" value="F:DNA-directed DNA polymerase activity"/>
    <property type="evidence" value="ECO:0007669"/>
    <property type="project" value="InterPro"/>
</dbReference>
<dbReference type="GO" id="GO:0046872">
    <property type="term" value="F:metal ion binding"/>
    <property type="evidence" value="ECO:0007669"/>
    <property type="project" value="UniProtKB-KW"/>
</dbReference>
<dbReference type="GO" id="GO:0006259">
    <property type="term" value="P:DNA metabolic process"/>
    <property type="evidence" value="ECO:0000250"/>
    <property type="project" value="UniProtKB"/>
</dbReference>
<dbReference type="GO" id="GO:0006304">
    <property type="term" value="P:DNA modification"/>
    <property type="evidence" value="ECO:0007669"/>
    <property type="project" value="UniProtKB-KW"/>
</dbReference>
<dbReference type="GO" id="GO:0006303">
    <property type="term" value="P:double-strand break repair via nonhomologous end joining"/>
    <property type="evidence" value="ECO:0007669"/>
    <property type="project" value="TreeGrafter"/>
</dbReference>
<dbReference type="CDD" id="cd18443">
    <property type="entry name" value="BRCT_DNTT"/>
    <property type="match status" value="1"/>
</dbReference>
<dbReference type="CDD" id="cd00141">
    <property type="entry name" value="NT_POLXc"/>
    <property type="match status" value="1"/>
</dbReference>
<dbReference type="FunFam" id="3.30.210.10:FF:000003">
    <property type="entry name" value="DNA nucleotidylexotransferase"/>
    <property type="match status" value="1"/>
</dbReference>
<dbReference type="FunFam" id="1.10.150.20:FF:000010">
    <property type="entry name" value="DNA polymerase lambda"/>
    <property type="match status" value="1"/>
</dbReference>
<dbReference type="FunFam" id="1.10.150.110:FF:000003">
    <property type="entry name" value="DNA polymerase mu"/>
    <property type="match status" value="1"/>
</dbReference>
<dbReference type="FunFam" id="3.30.460.10:FF:000068">
    <property type="entry name" value="DNA-directed DNA/RNA polymerase mu"/>
    <property type="match status" value="1"/>
</dbReference>
<dbReference type="FunFam" id="3.40.50.10190:FF:000035">
    <property type="entry name" value="DNA-directed DNA/RNA polymerase mu"/>
    <property type="match status" value="1"/>
</dbReference>
<dbReference type="Gene3D" id="1.10.150.20">
    <property type="entry name" value="5' to 3' exonuclease, C-terminal subdomain"/>
    <property type="match status" value="1"/>
</dbReference>
<dbReference type="Gene3D" id="3.30.460.10">
    <property type="entry name" value="Beta Polymerase, domain 2"/>
    <property type="match status" value="1"/>
</dbReference>
<dbReference type="Gene3D" id="3.40.50.10190">
    <property type="entry name" value="BRCT domain"/>
    <property type="match status" value="1"/>
</dbReference>
<dbReference type="Gene3D" id="1.10.150.110">
    <property type="entry name" value="DNA polymerase beta, N-terminal domain-like"/>
    <property type="match status" value="1"/>
</dbReference>
<dbReference type="Gene3D" id="3.30.210.10">
    <property type="entry name" value="DNA polymerase, thumb domain"/>
    <property type="match status" value="1"/>
</dbReference>
<dbReference type="InterPro" id="IPR001357">
    <property type="entry name" value="BRCT_dom"/>
</dbReference>
<dbReference type="InterPro" id="IPR036420">
    <property type="entry name" value="BRCT_dom_sf"/>
</dbReference>
<dbReference type="InterPro" id="IPR002054">
    <property type="entry name" value="DNA-dir_DNA_pol_X"/>
</dbReference>
<dbReference type="InterPro" id="IPR019843">
    <property type="entry name" value="DNA_pol-X_BS"/>
</dbReference>
<dbReference type="InterPro" id="IPR010996">
    <property type="entry name" value="DNA_pol_b-like_N"/>
</dbReference>
<dbReference type="InterPro" id="IPR028207">
    <property type="entry name" value="DNA_pol_B_palm_palm"/>
</dbReference>
<dbReference type="InterPro" id="IPR018944">
    <property type="entry name" value="DNA_pol_lambd_fingers_domain"/>
</dbReference>
<dbReference type="InterPro" id="IPR027421">
    <property type="entry name" value="DNA_pol_lamdba_lyase_dom_sf"/>
</dbReference>
<dbReference type="InterPro" id="IPR037160">
    <property type="entry name" value="DNA_Pol_thumb_sf"/>
</dbReference>
<dbReference type="InterPro" id="IPR022312">
    <property type="entry name" value="DNA_pol_X"/>
</dbReference>
<dbReference type="InterPro" id="IPR043519">
    <property type="entry name" value="NT_sf"/>
</dbReference>
<dbReference type="InterPro" id="IPR029398">
    <property type="entry name" value="PolB_thumb"/>
</dbReference>
<dbReference type="InterPro" id="IPR027292">
    <property type="entry name" value="TdT"/>
</dbReference>
<dbReference type="InterPro" id="IPR001726">
    <property type="entry name" value="TdT/Mu"/>
</dbReference>
<dbReference type="PANTHER" id="PTHR11276:SF21">
    <property type="entry name" value="DNA NUCLEOTIDYLEXOTRANSFERASE"/>
    <property type="match status" value="1"/>
</dbReference>
<dbReference type="PANTHER" id="PTHR11276">
    <property type="entry name" value="DNA POLYMERASE TYPE-X FAMILY MEMBER"/>
    <property type="match status" value="1"/>
</dbReference>
<dbReference type="Pfam" id="PF00533">
    <property type="entry name" value="BRCT"/>
    <property type="match status" value="1"/>
</dbReference>
<dbReference type="Pfam" id="PF14792">
    <property type="entry name" value="DNA_pol_B_palm"/>
    <property type="match status" value="1"/>
</dbReference>
<dbReference type="Pfam" id="PF14791">
    <property type="entry name" value="DNA_pol_B_thumb"/>
    <property type="match status" value="1"/>
</dbReference>
<dbReference type="Pfam" id="PF10391">
    <property type="entry name" value="DNA_pol_lambd_f"/>
    <property type="match status" value="1"/>
</dbReference>
<dbReference type="Pfam" id="PF14716">
    <property type="entry name" value="HHH_8"/>
    <property type="match status" value="1"/>
</dbReference>
<dbReference type="PIRSF" id="PIRSF000817">
    <property type="entry name" value="DNA_NT"/>
    <property type="match status" value="1"/>
</dbReference>
<dbReference type="PIRSF" id="PIRSF501175">
    <property type="entry name" value="TDT"/>
    <property type="match status" value="1"/>
</dbReference>
<dbReference type="PRINTS" id="PR00869">
    <property type="entry name" value="DNAPOLX"/>
</dbReference>
<dbReference type="PRINTS" id="PR00871">
    <property type="entry name" value="DNAPOLXTDT"/>
</dbReference>
<dbReference type="SMART" id="SM00292">
    <property type="entry name" value="BRCT"/>
    <property type="match status" value="1"/>
</dbReference>
<dbReference type="SMART" id="SM00483">
    <property type="entry name" value="POLXc"/>
    <property type="match status" value="1"/>
</dbReference>
<dbReference type="SUPFAM" id="SSF52113">
    <property type="entry name" value="BRCT domain"/>
    <property type="match status" value="1"/>
</dbReference>
<dbReference type="SUPFAM" id="SSF47802">
    <property type="entry name" value="DNA polymerase beta, N-terminal domain-like"/>
    <property type="match status" value="1"/>
</dbReference>
<dbReference type="SUPFAM" id="SSF81301">
    <property type="entry name" value="Nucleotidyltransferase"/>
    <property type="match status" value="1"/>
</dbReference>
<dbReference type="SUPFAM" id="SSF81585">
    <property type="entry name" value="PsbU/PolX domain-like"/>
    <property type="match status" value="1"/>
</dbReference>
<dbReference type="PROSITE" id="PS50172">
    <property type="entry name" value="BRCT"/>
    <property type="match status" value="1"/>
</dbReference>
<dbReference type="PROSITE" id="PS00522">
    <property type="entry name" value="DNA_POLYMERASE_X"/>
    <property type="match status" value="1"/>
</dbReference>
<evidence type="ECO:0000250" key="1">
    <source>
        <dbReference type="UniProtKB" id="P04053"/>
    </source>
</evidence>
<evidence type="ECO:0000250" key="2">
    <source>
        <dbReference type="UniProtKB" id="P06526"/>
    </source>
</evidence>
<evidence type="ECO:0000250" key="3">
    <source>
        <dbReference type="UniProtKB" id="P09838"/>
    </source>
</evidence>
<evidence type="ECO:0000255" key="4">
    <source>
        <dbReference type="PROSITE-ProRule" id="PRU00033"/>
    </source>
</evidence>
<evidence type="ECO:0000305" key="5"/>
<keyword id="KW-0460">Magnesium</keyword>
<keyword id="KW-0479">Metal-binding</keyword>
<keyword id="KW-0548">Nucleotidyltransferase</keyword>
<keyword id="KW-0539">Nucleus</keyword>
<keyword id="KW-0780">Terminal addition</keyword>
<keyword id="KW-0808">Transferase</keyword>